<feature type="chain" id="PRO_0000256908" description="Chaperonin GroEL">
    <location>
        <begin position="1"/>
        <end position="550"/>
    </location>
</feature>
<feature type="binding site" evidence="1">
    <location>
        <begin position="29"/>
        <end position="32"/>
    </location>
    <ligand>
        <name>ATP</name>
        <dbReference type="ChEBI" id="CHEBI:30616"/>
    </ligand>
</feature>
<feature type="binding site" evidence="1">
    <location>
        <position position="50"/>
    </location>
    <ligand>
        <name>ATP</name>
        <dbReference type="ChEBI" id="CHEBI:30616"/>
    </ligand>
</feature>
<feature type="binding site" evidence="1">
    <location>
        <begin position="86"/>
        <end position="90"/>
    </location>
    <ligand>
        <name>ATP</name>
        <dbReference type="ChEBI" id="CHEBI:30616"/>
    </ligand>
</feature>
<feature type="binding site" evidence="1">
    <location>
        <position position="417"/>
    </location>
    <ligand>
        <name>ATP</name>
        <dbReference type="ChEBI" id="CHEBI:30616"/>
    </ligand>
</feature>
<feature type="binding site" evidence="1">
    <location>
        <position position="499"/>
    </location>
    <ligand>
        <name>ATP</name>
        <dbReference type="ChEBI" id="CHEBI:30616"/>
    </ligand>
</feature>
<sequence length="550" mass="58544">MANVVVTGEQLDKSIREVVRILEDAVGCTAGPKGLTVAIGKSYGAPEVTKDGYKVIKSIKPEDPLALAIANIITQSASQCNDKVGDGTTTCSILTAKVIEEVSKAKAAGADIVCIKEGVLKAKEAVLEALMSMKREVLSEEEIAQVATISANGDKNIGSKIAQCVQEVGKDGVITVEESKGFKELDVEKTDGMQFDRGYLSPYFVTNSEKMLVEFENPYILLTEKKLNIIQPILPILENVARSGRPLLIIAEDVEGEALSTLVLNKLRGGLHVAAVKAPGFGDRRKDMLGDIAILTGAKHVISDDLAIKMEDLTLAELGTAKNIRITKDTTTIIGSVDNSSANVQSRINQIKMQIEASTSDYDKEKLRERLAKLSGGVAVLKVGGSSEVEVKERKDRVEDALHATRAAVEEGVVPGGGAALLYTLSVLENLKSKNDDEQLGINIVKRALQAPIKRIIKNSGSENAPCVIAHLLKQNDKELIFNVDTMNFANAFTSGVIDPLKVVRIAFDFAVSLAAVFMTLNAIVVDVPSKDDANAGAGGMGGMGGMGGF</sequence>
<gene>
    <name evidence="1" type="primary">groEL</name>
    <name evidence="1" type="synonym">groL</name>
    <name type="ordered locus">ECH_0365</name>
</gene>
<organism>
    <name type="scientific">Ehrlichia chaffeensis (strain ATCC CRL-10679 / Arkansas)</name>
    <dbReference type="NCBI Taxonomy" id="205920"/>
    <lineage>
        <taxon>Bacteria</taxon>
        <taxon>Pseudomonadati</taxon>
        <taxon>Pseudomonadota</taxon>
        <taxon>Alphaproteobacteria</taxon>
        <taxon>Rickettsiales</taxon>
        <taxon>Anaplasmataceae</taxon>
        <taxon>Ehrlichia</taxon>
    </lineage>
</organism>
<comment type="function">
    <text evidence="1">Together with its co-chaperonin GroES, plays an essential role in assisting protein folding. The GroEL-GroES system forms a nano-cage that allows encapsulation of the non-native substrate proteins and provides a physical environment optimized to promote and accelerate protein folding.</text>
</comment>
<comment type="catalytic activity">
    <reaction evidence="1">
        <text>ATP + H2O + a folded polypeptide = ADP + phosphate + an unfolded polypeptide.</text>
        <dbReference type="EC" id="5.6.1.7"/>
    </reaction>
</comment>
<comment type="subunit">
    <text evidence="1">Forms a cylinder of 14 subunits composed of two heptameric rings stacked back-to-back. Interacts with the co-chaperonin GroES.</text>
</comment>
<comment type="subcellular location">
    <subcellularLocation>
        <location evidence="1">Cytoplasm</location>
    </subcellularLocation>
</comment>
<comment type="similarity">
    <text evidence="1">Belongs to the chaperonin (HSP60) family.</text>
</comment>
<name>CH60_EHRCR</name>
<protein>
    <recommendedName>
        <fullName evidence="1">Chaperonin GroEL</fullName>
        <ecNumber evidence="1">5.6.1.7</ecNumber>
    </recommendedName>
    <alternativeName>
        <fullName evidence="1">60 kDa chaperonin</fullName>
    </alternativeName>
    <alternativeName>
        <fullName evidence="1">Chaperonin-60</fullName>
        <shortName evidence="1">Cpn60</shortName>
    </alternativeName>
</protein>
<accession>Q2GH98</accession>
<proteinExistence type="inferred from homology"/>
<reference key="1">
    <citation type="journal article" date="2006" name="PLoS Genet.">
        <title>Comparative genomics of emerging human ehrlichiosis agents.</title>
        <authorList>
            <person name="Dunning Hotopp J.C."/>
            <person name="Lin M."/>
            <person name="Madupu R."/>
            <person name="Crabtree J."/>
            <person name="Angiuoli S.V."/>
            <person name="Eisen J.A."/>
            <person name="Seshadri R."/>
            <person name="Ren Q."/>
            <person name="Wu M."/>
            <person name="Utterback T.R."/>
            <person name="Smith S."/>
            <person name="Lewis M."/>
            <person name="Khouri H."/>
            <person name="Zhang C."/>
            <person name="Niu H."/>
            <person name="Lin Q."/>
            <person name="Ohashi N."/>
            <person name="Zhi N."/>
            <person name="Nelson W.C."/>
            <person name="Brinkac L.M."/>
            <person name="Dodson R.J."/>
            <person name="Rosovitz M.J."/>
            <person name="Sundaram J.P."/>
            <person name="Daugherty S.C."/>
            <person name="Davidsen T."/>
            <person name="Durkin A.S."/>
            <person name="Gwinn M.L."/>
            <person name="Haft D.H."/>
            <person name="Selengut J.D."/>
            <person name="Sullivan S.A."/>
            <person name="Zafar N."/>
            <person name="Zhou L."/>
            <person name="Benahmed F."/>
            <person name="Forberger H."/>
            <person name="Halpin R."/>
            <person name="Mulligan S."/>
            <person name="Robinson J."/>
            <person name="White O."/>
            <person name="Rikihisa Y."/>
            <person name="Tettelin H."/>
        </authorList>
    </citation>
    <scope>NUCLEOTIDE SEQUENCE [LARGE SCALE GENOMIC DNA]</scope>
    <source>
        <strain>ATCC CRL-10679 / Arkansas</strain>
    </source>
</reference>
<evidence type="ECO:0000255" key="1">
    <source>
        <dbReference type="HAMAP-Rule" id="MF_00600"/>
    </source>
</evidence>
<keyword id="KW-0067">ATP-binding</keyword>
<keyword id="KW-0143">Chaperone</keyword>
<keyword id="KW-0963">Cytoplasm</keyword>
<keyword id="KW-0413">Isomerase</keyword>
<keyword id="KW-0547">Nucleotide-binding</keyword>
<keyword id="KW-1185">Reference proteome</keyword>
<dbReference type="EC" id="5.6.1.7" evidence="1"/>
<dbReference type="EMBL" id="CP000236">
    <property type="protein sequence ID" value="ABD44992.1"/>
    <property type="molecule type" value="Genomic_DNA"/>
</dbReference>
<dbReference type="RefSeq" id="WP_011452552.1">
    <property type="nucleotide sequence ID" value="NC_007799.1"/>
</dbReference>
<dbReference type="SMR" id="Q2GH98"/>
<dbReference type="STRING" id="205920.ECH_0365"/>
<dbReference type="KEGG" id="ech:ECH_0365"/>
<dbReference type="eggNOG" id="COG0459">
    <property type="taxonomic scope" value="Bacteria"/>
</dbReference>
<dbReference type="HOGENOM" id="CLU_016503_3_0_5"/>
<dbReference type="OrthoDB" id="9766614at2"/>
<dbReference type="Proteomes" id="UP000008320">
    <property type="component" value="Chromosome"/>
</dbReference>
<dbReference type="GO" id="GO:0005737">
    <property type="term" value="C:cytoplasm"/>
    <property type="evidence" value="ECO:0007669"/>
    <property type="project" value="UniProtKB-SubCell"/>
</dbReference>
<dbReference type="GO" id="GO:0005524">
    <property type="term" value="F:ATP binding"/>
    <property type="evidence" value="ECO:0007669"/>
    <property type="project" value="UniProtKB-UniRule"/>
</dbReference>
<dbReference type="GO" id="GO:0140662">
    <property type="term" value="F:ATP-dependent protein folding chaperone"/>
    <property type="evidence" value="ECO:0007669"/>
    <property type="project" value="InterPro"/>
</dbReference>
<dbReference type="GO" id="GO:0016853">
    <property type="term" value="F:isomerase activity"/>
    <property type="evidence" value="ECO:0007669"/>
    <property type="project" value="UniProtKB-KW"/>
</dbReference>
<dbReference type="GO" id="GO:0051082">
    <property type="term" value="F:unfolded protein binding"/>
    <property type="evidence" value="ECO:0007669"/>
    <property type="project" value="UniProtKB-UniRule"/>
</dbReference>
<dbReference type="GO" id="GO:0042026">
    <property type="term" value="P:protein refolding"/>
    <property type="evidence" value="ECO:0007669"/>
    <property type="project" value="UniProtKB-UniRule"/>
</dbReference>
<dbReference type="CDD" id="cd03344">
    <property type="entry name" value="GroEL"/>
    <property type="match status" value="1"/>
</dbReference>
<dbReference type="FunFam" id="3.50.7.10:FF:000001">
    <property type="entry name" value="60 kDa chaperonin"/>
    <property type="match status" value="1"/>
</dbReference>
<dbReference type="Gene3D" id="3.50.7.10">
    <property type="entry name" value="GroEL"/>
    <property type="match status" value="1"/>
</dbReference>
<dbReference type="Gene3D" id="1.10.560.10">
    <property type="entry name" value="GroEL-like equatorial domain"/>
    <property type="match status" value="1"/>
</dbReference>
<dbReference type="Gene3D" id="3.30.260.10">
    <property type="entry name" value="TCP-1-like chaperonin intermediate domain"/>
    <property type="match status" value="1"/>
</dbReference>
<dbReference type="HAMAP" id="MF_00600">
    <property type="entry name" value="CH60"/>
    <property type="match status" value="1"/>
</dbReference>
<dbReference type="InterPro" id="IPR018370">
    <property type="entry name" value="Chaperonin_Cpn60_CS"/>
</dbReference>
<dbReference type="InterPro" id="IPR001844">
    <property type="entry name" value="Cpn60/GroEL"/>
</dbReference>
<dbReference type="InterPro" id="IPR002423">
    <property type="entry name" value="Cpn60/GroEL/TCP-1"/>
</dbReference>
<dbReference type="InterPro" id="IPR027409">
    <property type="entry name" value="GroEL-like_apical_dom_sf"/>
</dbReference>
<dbReference type="InterPro" id="IPR027413">
    <property type="entry name" value="GROEL-like_equatorial_sf"/>
</dbReference>
<dbReference type="InterPro" id="IPR027410">
    <property type="entry name" value="TCP-1-like_intermed_sf"/>
</dbReference>
<dbReference type="NCBIfam" id="TIGR02348">
    <property type="entry name" value="GroEL"/>
    <property type="match status" value="1"/>
</dbReference>
<dbReference type="NCBIfam" id="NF000592">
    <property type="entry name" value="PRK00013.1"/>
    <property type="match status" value="1"/>
</dbReference>
<dbReference type="NCBIfam" id="NF009487">
    <property type="entry name" value="PRK12849.1"/>
    <property type="match status" value="1"/>
</dbReference>
<dbReference type="NCBIfam" id="NF009488">
    <property type="entry name" value="PRK12850.1"/>
    <property type="match status" value="1"/>
</dbReference>
<dbReference type="NCBIfam" id="NF009489">
    <property type="entry name" value="PRK12851.1"/>
    <property type="match status" value="1"/>
</dbReference>
<dbReference type="PANTHER" id="PTHR45633">
    <property type="entry name" value="60 KDA HEAT SHOCK PROTEIN, MITOCHONDRIAL"/>
    <property type="match status" value="1"/>
</dbReference>
<dbReference type="Pfam" id="PF00118">
    <property type="entry name" value="Cpn60_TCP1"/>
    <property type="match status" value="1"/>
</dbReference>
<dbReference type="PRINTS" id="PR00298">
    <property type="entry name" value="CHAPERONIN60"/>
</dbReference>
<dbReference type="SUPFAM" id="SSF52029">
    <property type="entry name" value="GroEL apical domain-like"/>
    <property type="match status" value="1"/>
</dbReference>
<dbReference type="SUPFAM" id="SSF48592">
    <property type="entry name" value="GroEL equatorial domain-like"/>
    <property type="match status" value="1"/>
</dbReference>
<dbReference type="SUPFAM" id="SSF54849">
    <property type="entry name" value="GroEL-intermediate domain like"/>
    <property type="match status" value="1"/>
</dbReference>
<dbReference type="PROSITE" id="PS00296">
    <property type="entry name" value="CHAPERONINS_CPN60"/>
    <property type="match status" value="1"/>
</dbReference>